<evidence type="ECO:0000250" key="1"/>
<evidence type="ECO:0000256" key="2">
    <source>
        <dbReference type="SAM" id="MobiDB-lite"/>
    </source>
</evidence>
<evidence type="ECO:0000305" key="3"/>
<accession>Q9YDA1</accession>
<name>PIMT_AERPE</name>
<organism>
    <name type="scientific">Aeropyrum pernix (strain ATCC 700893 / DSM 11879 / JCM 9820 / NBRC 100138 / K1)</name>
    <dbReference type="NCBI Taxonomy" id="272557"/>
    <lineage>
        <taxon>Archaea</taxon>
        <taxon>Thermoproteota</taxon>
        <taxon>Thermoprotei</taxon>
        <taxon>Desulfurococcales</taxon>
        <taxon>Desulfurococcaceae</taxon>
        <taxon>Aeropyrum</taxon>
    </lineage>
</organism>
<keyword id="KW-0963">Cytoplasm</keyword>
<keyword id="KW-0489">Methyltransferase</keyword>
<keyword id="KW-1185">Reference proteome</keyword>
<keyword id="KW-0949">S-adenosyl-L-methionine</keyword>
<keyword id="KW-0808">Transferase</keyword>
<proteinExistence type="inferred from homology"/>
<feature type="chain" id="PRO_0000111911" description="Protein-L-isoaspartate O-methyltransferase">
    <location>
        <begin position="1"/>
        <end position="260"/>
    </location>
</feature>
<feature type="region of interest" description="Disordered" evidence="2">
    <location>
        <begin position="1"/>
        <end position="27"/>
    </location>
</feature>
<feature type="active site" evidence="1">
    <location>
        <position position="92"/>
    </location>
</feature>
<reference key="1">
    <citation type="journal article" date="1999" name="DNA Res.">
        <title>Complete genome sequence of an aerobic hyper-thermophilic crenarchaeon, Aeropyrum pernix K1.</title>
        <authorList>
            <person name="Kawarabayasi Y."/>
            <person name="Hino Y."/>
            <person name="Horikawa H."/>
            <person name="Yamazaki S."/>
            <person name="Haikawa Y."/>
            <person name="Jin-no K."/>
            <person name="Takahashi M."/>
            <person name="Sekine M."/>
            <person name="Baba S."/>
            <person name="Ankai A."/>
            <person name="Kosugi H."/>
            <person name="Hosoyama A."/>
            <person name="Fukui S."/>
            <person name="Nagai Y."/>
            <person name="Nishijima K."/>
            <person name="Nakazawa H."/>
            <person name="Takamiya M."/>
            <person name="Masuda S."/>
            <person name="Funahashi T."/>
            <person name="Tanaka T."/>
            <person name="Kudoh Y."/>
            <person name="Yamazaki J."/>
            <person name="Kushida N."/>
            <person name="Oguchi A."/>
            <person name="Aoki K."/>
            <person name="Kubota K."/>
            <person name="Nakamura Y."/>
            <person name="Nomura N."/>
            <person name="Sako Y."/>
            <person name="Kikuchi H."/>
        </authorList>
    </citation>
    <scope>NUCLEOTIDE SEQUENCE [LARGE SCALE GENOMIC DNA]</scope>
    <source>
        <strain>ATCC 700893 / DSM 11879 / JCM 9820 / NBRC 100138 / K1</strain>
    </source>
</reference>
<protein>
    <recommendedName>
        <fullName>Protein-L-isoaspartate O-methyltransferase</fullName>
        <ecNumber>2.1.1.77</ecNumber>
    </recommendedName>
    <alternativeName>
        <fullName>L-isoaspartyl protein carboxyl methyltransferase</fullName>
    </alternativeName>
    <alternativeName>
        <fullName>Protein L-isoaspartyl methyltransferase</fullName>
    </alternativeName>
    <alternativeName>
        <fullName>Protein-beta-aspartate methyltransferase</fullName>
        <shortName>PIMT</shortName>
    </alternativeName>
</protein>
<gene>
    <name type="primary">pcm</name>
    <name type="ordered locus">APE_1011.1</name>
</gene>
<sequence>MKSPVAGAVLDPSTPPPTTGTSWRWPGLRDADPYREARLRMVEQLRRSGLVTSRRVLEAMARVPRHLFVPPEYRGMAYEDRPLPIGHGQTISAPGVVGRMLQLLDPQPGEKVLDVGAGSGYQSALLAELVTPGGRVYAVERIPELAEYARENLEKTGYRGVVEVVVGDGSKGLPQHAPYHRIKVAAAAPKPPKPLVEQLAPGGRMVIPIGTPDLQILTIIEKTPDGRVRERRDIEVLFVPLIGEHGYREDWRKQYWQWWR</sequence>
<dbReference type="EC" id="2.1.1.77"/>
<dbReference type="EMBL" id="BA000002">
    <property type="protein sequence ID" value="BAA79996.2"/>
    <property type="molecule type" value="Genomic_DNA"/>
</dbReference>
<dbReference type="PIR" id="D72699">
    <property type="entry name" value="D72699"/>
</dbReference>
<dbReference type="RefSeq" id="WP_010866130.1">
    <property type="nucleotide sequence ID" value="NC_000854.2"/>
</dbReference>
<dbReference type="SMR" id="Q9YDA1"/>
<dbReference type="STRING" id="272557.APE_1011.1"/>
<dbReference type="EnsemblBacteria" id="BAA79996">
    <property type="protein sequence ID" value="BAA79996"/>
    <property type="gene ID" value="APE_1011.1"/>
</dbReference>
<dbReference type="GeneID" id="1445071"/>
<dbReference type="KEGG" id="ape:APE_1011.1"/>
<dbReference type="PATRIC" id="fig|272557.25.peg.728"/>
<dbReference type="eggNOG" id="arCOG00976">
    <property type="taxonomic scope" value="Archaea"/>
</dbReference>
<dbReference type="Proteomes" id="UP000002518">
    <property type="component" value="Chromosome"/>
</dbReference>
<dbReference type="GO" id="GO:0005737">
    <property type="term" value="C:cytoplasm"/>
    <property type="evidence" value="ECO:0007669"/>
    <property type="project" value="UniProtKB-SubCell"/>
</dbReference>
<dbReference type="GO" id="GO:0004719">
    <property type="term" value="F:protein-L-isoaspartate (D-aspartate) O-methyltransferase activity"/>
    <property type="evidence" value="ECO:0007669"/>
    <property type="project" value="UniProtKB-UniRule"/>
</dbReference>
<dbReference type="GO" id="GO:0032259">
    <property type="term" value="P:methylation"/>
    <property type="evidence" value="ECO:0007669"/>
    <property type="project" value="UniProtKB-KW"/>
</dbReference>
<dbReference type="GO" id="GO:0036211">
    <property type="term" value="P:protein modification process"/>
    <property type="evidence" value="ECO:0007669"/>
    <property type="project" value="UniProtKB-UniRule"/>
</dbReference>
<dbReference type="GO" id="GO:0030091">
    <property type="term" value="P:protein repair"/>
    <property type="evidence" value="ECO:0007669"/>
    <property type="project" value="UniProtKB-UniRule"/>
</dbReference>
<dbReference type="CDD" id="cd02440">
    <property type="entry name" value="AdoMet_MTases"/>
    <property type="match status" value="1"/>
</dbReference>
<dbReference type="FunFam" id="3.40.50.150:FF:000010">
    <property type="entry name" value="Protein-L-isoaspartate O-methyltransferase"/>
    <property type="match status" value="1"/>
</dbReference>
<dbReference type="Gene3D" id="3.40.50.150">
    <property type="entry name" value="Vaccinia Virus protein VP39"/>
    <property type="match status" value="1"/>
</dbReference>
<dbReference type="HAMAP" id="MF_00090">
    <property type="entry name" value="PIMT"/>
    <property type="match status" value="1"/>
</dbReference>
<dbReference type="InterPro" id="IPR000682">
    <property type="entry name" value="PCMT"/>
</dbReference>
<dbReference type="InterPro" id="IPR029063">
    <property type="entry name" value="SAM-dependent_MTases_sf"/>
</dbReference>
<dbReference type="NCBIfam" id="TIGR00080">
    <property type="entry name" value="pimt"/>
    <property type="match status" value="1"/>
</dbReference>
<dbReference type="NCBIfam" id="NF001453">
    <property type="entry name" value="PRK00312.1"/>
    <property type="match status" value="1"/>
</dbReference>
<dbReference type="PANTHER" id="PTHR11579">
    <property type="entry name" value="PROTEIN-L-ISOASPARTATE O-METHYLTRANSFERASE"/>
    <property type="match status" value="1"/>
</dbReference>
<dbReference type="PANTHER" id="PTHR11579:SF0">
    <property type="entry name" value="PROTEIN-L-ISOASPARTATE(D-ASPARTATE) O-METHYLTRANSFERASE"/>
    <property type="match status" value="1"/>
</dbReference>
<dbReference type="Pfam" id="PF01135">
    <property type="entry name" value="PCMT"/>
    <property type="match status" value="1"/>
</dbReference>
<dbReference type="SUPFAM" id="SSF53335">
    <property type="entry name" value="S-adenosyl-L-methionine-dependent methyltransferases"/>
    <property type="match status" value="1"/>
</dbReference>
<dbReference type="PROSITE" id="PS01279">
    <property type="entry name" value="PCMT"/>
    <property type="match status" value="1"/>
</dbReference>
<comment type="function">
    <text evidence="1">Catalyzes the methyl esterification of L-isoaspartyl residues in peptides and proteins that result from spontaneous decomposition of normal L-aspartyl and L-asparaginyl residues. It plays a role in the repair and/or degradation of damaged proteins (By similarity).</text>
</comment>
<comment type="catalytic activity">
    <reaction>
        <text>[protein]-L-isoaspartate + S-adenosyl-L-methionine = [protein]-L-isoaspartate alpha-methyl ester + S-adenosyl-L-homocysteine</text>
        <dbReference type="Rhea" id="RHEA:12705"/>
        <dbReference type="Rhea" id="RHEA-COMP:12143"/>
        <dbReference type="Rhea" id="RHEA-COMP:12144"/>
        <dbReference type="ChEBI" id="CHEBI:57856"/>
        <dbReference type="ChEBI" id="CHEBI:59789"/>
        <dbReference type="ChEBI" id="CHEBI:90596"/>
        <dbReference type="ChEBI" id="CHEBI:90598"/>
        <dbReference type="EC" id="2.1.1.77"/>
    </reaction>
</comment>
<comment type="subcellular location">
    <subcellularLocation>
        <location evidence="1">Cytoplasm</location>
    </subcellularLocation>
</comment>
<comment type="similarity">
    <text evidence="3">Belongs to the methyltransferase superfamily. L-isoaspartyl/D-aspartyl protein methyltransferase family.</text>
</comment>